<accession>B3H061</accession>
<reference key="1">
    <citation type="submission" date="2008-06" db="EMBL/GenBank/DDBJ databases">
        <title>Genome and proteome analysis of A. pleuropneumoniae serotype 7.</title>
        <authorList>
            <person name="Linke B."/>
            <person name="Buettner F."/>
            <person name="Martinez-Arias R."/>
            <person name="Goesmann A."/>
            <person name="Baltes N."/>
            <person name="Tegetmeyer H."/>
            <person name="Singh M."/>
            <person name="Gerlach G.F."/>
        </authorList>
    </citation>
    <scope>NUCLEOTIDE SEQUENCE [LARGE SCALE GENOMIC DNA]</scope>
    <source>
        <strain>AP76</strain>
    </source>
</reference>
<comment type="function">
    <text evidence="1">Catalyzes the attachment of threonine to tRNA(Thr) in a two-step reaction: L-threonine is first activated by ATP to form Thr-AMP and then transferred to the acceptor end of tRNA(Thr). Also edits incorrectly charged L-seryl-tRNA(Thr).</text>
</comment>
<comment type="catalytic activity">
    <reaction evidence="1">
        <text>tRNA(Thr) + L-threonine + ATP = L-threonyl-tRNA(Thr) + AMP + diphosphate + H(+)</text>
        <dbReference type="Rhea" id="RHEA:24624"/>
        <dbReference type="Rhea" id="RHEA-COMP:9670"/>
        <dbReference type="Rhea" id="RHEA-COMP:9704"/>
        <dbReference type="ChEBI" id="CHEBI:15378"/>
        <dbReference type="ChEBI" id="CHEBI:30616"/>
        <dbReference type="ChEBI" id="CHEBI:33019"/>
        <dbReference type="ChEBI" id="CHEBI:57926"/>
        <dbReference type="ChEBI" id="CHEBI:78442"/>
        <dbReference type="ChEBI" id="CHEBI:78534"/>
        <dbReference type="ChEBI" id="CHEBI:456215"/>
        <dbReference type="EC" id="6.1.1.3"/>
    </reaction>
</comment>
<comment type="cofactor">
    <cofactor evidence="1">
        <name>Zn(2+)</name>
        <dbReference type="ChEBI" id="CHEBI:29105"/>
    </cofactor>
    <text evidence="1">Binds 1 zinc ion per subunit.</text>
</comment>
<comment type="subunit">
    <text evidence="1">Homodimer.</text>
</comment>
<comment type="subcellular location">
    <subcellularLocation>
        <location evidence="1">Cytoplasm</location>
    </subcellularLocation>
</comment>
<comment type="similarity">
    <text evidence="1">Belongs to the class-II aminoacyl-tRNA synthetase family.</text>
</comment>
<sequence length="643" mass="73533">MPIITLPDGSQRQFDNPVSVMEVAQSIGAGLAKATIAGRVNGERRDACDIISEDSSLEIITAKDEDGLEIIRHSCAHLLGHAIKQLFPDVKMAIGPTIDNGFYYDVDLDRSLTQEDLDAIEKRMLELAKTNYDVVKKRVSWQEARDTFEKRGEPYKMAILDENIERTATPALYHHEEYIDMCRGPHVPNMRFCHHFKLQKVAGAYWRGDSKNKMLQRIYGTAWADKKQLAEYLTRLEEAAKRDHRRIGKALDLYHMQEEAPGLVFWHNDGWTIFRELETFVRTKLKEYDYQEVKGPFMMDRVLWERTGHWQNYADLMFTTQSENREYAIKPMNCPGHVQIFNQGLKSYRDLPIRMAEFGSCHRNEPSGSLHGLMRVRGFTQDDAHIFCTEDQIESEVTSCIRMVYDIYSTFGFSNIQVKLSTRPENRIGDDAMWDRAEDGLAKALTANGLSYEIQEGEGAFYGPKIEFALRDCLDREWQCGTIQLDFALPGRLDASYVAEDNGRRTPVMIHRAILGSIERFIGIITEEYAGFFPTWLAPTQAVVMNITDSQADYVQKVTKALSDAGIRAKSDLRNEKVGFKVREHTLRRVPYMLVCGDKEIEAGKVSVRTRKGADLGTFTIDEFVEILKNQVKARGLKLLGEE</sequence>
<name>SYT_ACTP7</name>
<gene>
    <name evidence="1" type="primary">thrS</name>
    <name type="ordered locus">APP7_0221</name>
</gene>
<proteinExistence type="inferred from homology"/>
<keyword id="KW-0030">Aminoacyl-tRNA synthetase</keyword>
<keyword id="KW-0067">ATP-binding</keyword>
<keyword id="KW-0963">Cytoplasm</keyword>
<keyword id="KW-0436">Ligase</keyword>
<keyword id="KW-0479">Metal-binding</keyword>
<keyword id="KW-0547">Nucleotide-binding</keyword>
<keyword id="KW-0648">Protein biosynthesis</keyword>
<keyword id="KW-0694">RNA-binding</keyword>
<keyword id="KW-0820">tRNA-binding</keyword>
<keyword id="KW-0862">Zinc</keyword>
<feature type="chain" id="PRO_1000098537" description="Threonine--tRNA ligase">
    <location>
        <begin position="1"/>
        <end position="643"/>
    </location>
</feature>
<feature type="domain" description="TGS" evidence="2">
    <location>
        <begin position="1"/>
        <end position="61"/>
    </location>
</feature>
<feature type="region of interest" description="Catalytic" evidence="1">
    <location>
        <begin position="243"/>
        <end position="534"/>
    </location>
</feature>
<feature type="binding site" evidence="1">
    <location>
        <position position="334"/>
    </location>
    <ligand>
        <name>Zn(2+)</name>
        <dbReference type="ChEBI" id="CHEBI:29105"/>
    </ligand>
</feature>
<feature type="binding site" evidence="1">
    <location>
        <position position="385"/>
    </location>
    <ligand>
        <name>Zn(2+)</name>
        <dbReference type="ChEBI" id="CHEBI:29105"/>
    </ligand>
</feature>
<feature type="binding site" evidence="1">
    <location>
        <position position="511"/>
    </location>
    <ligand>
        <name>Zn(2+)</name>
        <dbReference type="ChEBI" id="CHEBI:29105"/>
    </ligand>
</feature>
<evidence type="ECO:0000255" key="1">
    <source>
        <dbReference type="HAMAP-Rule" id="MF_00184"/>
    </source>
</evidence>
<evidence type="ECO:0000255" key="2">
    <source>
        <dbReference type="PROSITE-ProRule" id="PRU01228"/>
    </source>
</evidence>
<organism>
    <name type="scientific">Actinobacillus pleuropneumoniae serotype 7 (strain AP76)</name>
    <dbReference type="NCBI Taxonomy" id="537457"/>
    <lineage>
        <taxon>Bacteria</taxon>
        <taxon>Pseudomonadati</taxon>
        <taxon>Pseudomonadota</taxon>
        <taxon>Gammaproteobacteria</taxon>
        <taxon>Pasteurellales</taxon>
        <taxon>Pasteurellaceae</taxon>
        <taxon>Actinobacillus</taxon>
    </lineage>
</organism>
<protein>
    <recommendedName>
        <fullName evidence="1">Threonine--tRNA ligase</fullName>
        <ecNumber evidence="1">6.1.1.3</ecNumber>
    </recommendedName>
    <alternativeName>
        <fullName evidence="1">Threonyl-tRNA synthetase</fullName>
        <shortName evidence="1">ThrRS</shortName>
    </alternativeName>
</protein>
<dbReference type="EC" id="6.1.1.3" evidence="1"/>
<dbReference type="EMBL" id="CP001091">
    <property type="protein sequence ID" value="ACE60873.1"/>
    <property type="molecule type" value="Genomic_DNA"/>
</dbReference>
<dbReference type="RefSeq" id="WP_005606946.1">
    <property type="nucleotide sequence ID" value="NC_010939.1"/>
</dbReference>
<dbReference type="SMR" id="B3H061"/>
<dbReference type="KEGG" id="apa:APP7_0221"/>
<dbReference type="HOGENOM" id="CLU_008554_0_1_6"/>
<dbReference type="Proteomes" id="UP000001226">
    <property type="component" value="Chromosome"/>
</dbReference>
<dbReference type="GO" id="GO:0005829">
    <property type="term" value="C:cytosol"/>
    <property type="evidence" value="ECO:0007669"/>
    <property type="project" value="TreeGrafter"/>
</dbReference>
<dbReference type="GO" id="GO:0005524">
    <property type="term" value="F:ATP binding"/>
    <property type="evidence" value="ECO:0007669"/>
    <property type="project" value="UniProtKB-UniRule"/>
</dbReference>
<dbReference type="GO" id="GO:0046872">
    <property type="term" value="F:metal ion binding"/>
    <property type="evidence" value="ECO:0007669"/>
    <property type="project" value="UniProtKB-KW"/>
</dbReference>
<dbReference type="GO" id="GO:0004829">
    <property type="term" value="F:threonine-tRNA ligase activity"/>
    <property type="evidence" value="ECO:0007669"/>
    <property type="project" value="UniProtKB-UniRule"/>
</dbReference>
<dbReference type="GO" id="GO:0000049">
    <property type="term" value="F:tRNA binding"/>
    <property type="evidence" value="ECO:0007669"/>
    <property type="project" value="UniProtKB-KW"/>
</dbReference>
<dbReference type="GO" id="GO:0006435">
    <property type="term" value="P:threonyl-tRNA aminoacylation"/>
    <property type="evidence" value="ECO:0007669"/>
    <property type="project" value="UniProtKB-UniRule"/>
</dbReference>
<dbReference type="CDD" id="cd01667">
    <property type="entry name" value="TGS_ThrRS"/>
    <property type="match status" value="1"/>
</dbReference>
<dbReference type="CDD" id="cd00860">
    <property type="entry name" value="ThrRS_anticodon"/>
    <property type="match status" value="1"/>
</dbReference>
<dbReference type="CDD" id="cd00771">
    <property type="entry name" value="ThrRS_core"/>
    <property type="match status" value="1"/>
</dbReference>
<dbReference type="FunFam" id="3.10.20.30:FF:000005">
    <property type="entry name" value="Threonine--tRNA ligase"/>
    <property type="match status" value="1"/>
</dbReference>
<dbReference type="FunFam" id="3.30.54.20:FF:000002">
    <property type="entry name" value="Threonine--tRNA ligase"/>
    <property type="match status" value="1"/>
</dbReference>
<dbReference type="FunFam" id="3.30.930.10:FF:000002">
    <property type="entry name" value="Threonine--tRNA ligase"/>
    <property type="match status" value="1"/>
</dbReference>
<dbReference type="FunFam" id="3.40.50.800:FF:000001">
    <property type="entry name" value="Threonine--tRNA ligase"/>
    <property type="match status" value="1"/>
</dbReference>
<dbReference type="FunFam" id="3.30.980.10:FF:000005">
    <property type="entry name" value="Threonyl-tRNA synthetase, mitochondrial"/>
    <property type="match status" value="1"/>
</dbReference>
<dbReference type="Gene3D" id="3.10.20.30">
    <property type="match status" value="1"/>
</dbReference>
<dbReference type="Gene3D" id="3.30.54.20">
    <property type="match status" value="1"/>
</dbReference>
<dbReference type="Gene3D" id="3.40.50.800">
    <property type="entry name" value="Anticodon-binding domain"/>
    <property type="match status" value="1"/>
</dbReference>
<dbReference type="Gene3D" id="3.30.930.10">
    <property type="entry name" value="Bira Bifunctional Protein, Domain 2"/>
    <property type="match status" value="1"/>
</dbReference>
<dbReference type="Gene3D" id="3.30.980.10">
    <property type="entry name" value="Threonyl-trna Synthetase, Chain A, domain 2"/>
    <property type="match status" value="1"/>
</dbReference>
<dbReference type="HAMAP" id="MF_00184">
    <property type="entry name" value="Thr_tRNA_synth"/>
    <property type="match status" value="1"/>
</dbReference>
<dbReference type="InterPro" id="IPR002314">
    <property type="entry name" value="aa-tRNA-synt_IIb"/>
</dbReference>
<dbReference type="InterPro" id="IPR006195">
    <property type="entry name" value="aa-tRNA-synth_II"/>
</dbReference>
<dbReference type="InterPro" id="IPR045864">
    <property type="entry name" value="aa-tRNA-synth_II/BPL/LPL"/>
</dbReference>
<dbReference type="InterPro" id="IPR004154">
    <property type="entry name" value="Anticodon-bd"/>
</dbReference>
<dbReference type="InterPro" id="IPR036621">
    <property type="entry name" value="Anticodon-bd_dom_sf"/>
</dbReference>
<dbReference type="InterPro" id="IPR012675">
    <property type="entry name" value="Beta-grasp_dom_sf"/>
</dbReference>
<dbReference type="InterPro" id="IPR004095">
    <property type="entry name" value="TGS"/>
</dbReference>
<dbReference type="InterPro" id="IPR012676">
    <property type="entry name" value="TGS-like"/>
</dbReference>
<dbReference type="InterPro" id="IPR002320">
    <property type="entry name" value="Thr-tRNA-ligase_IIa"/>
</dbReference>
<dbReference type="InterPro" id="IPR018163">
    <property type="entry name" value="Thr/Ala-tRNA-synth_IIc_edit"/>
</dbReference>
<dbReference type="InterPro" id="IPR047246">
    <property type="entry name" value="ThrRS_anticodon"/>
</dbReference>
<dbReference type="InterPro" id="IPR033728">
    <property type="entry name" value="ThrRS_core"/>
</dbReference>
<dbReference type="InterPro" id="IPR012947">
    <property type="entry name" value="tRNA_SAD"/>
</dbReference>
<dbReference type="NCBIfam" id="TIGR00418">
    <property type="entry name" value="thrS"/>
    <property type="match status" value="1"/>
</dbReference>
<dbReference type="PANTHER" id="PTHR11451:SF44">
    <property type="entry name" value="THREONINE--TRNA LIGASE, CHLOROPLASTIC_MITOCHONDRIAL 2"/>
    <property type="match status" value="1"/>
</dbReference>
<dbReference type="PANTHER" id="PTHR11451">
    <property type="entry name" value="THREONINE-TRNA LIGASE"/>
    <property type="match status" value="1"/>
</dbReference>
<dbReference type="Pfam" id="PF03129">
    <property type="entry name" value="HGTP_anticodon"/>
    <property type="match status" value="1"/>
</dbReference>
<dbReference type="Pfam" id="PF02824">
    <property type="entry name" value="TGS"/>
    <property type="match status" value="1"/>
</dbReference>
<dbReference type="Pfam" id="PF00587">
    <property type="entry name" value="tRNA-synt_2b"/>
    <property type="match status" value="1"/>
</dbReference>
<dbReference type="Pfam" id="PF07973">
    <property type="entry name" value="tRNA_SAD"/>
    <property type="match status" value="1"/>
</dbReference>
<dbReference type="PRINTS" id="PR01047">
    <property type="entry name" value="TRNASYNTHTHR"/>
</dbReference>
<dbReference type="SMART" id="SM00863">
    <property type="entry name" value="tRNA_SAD"/>
    <property type="match status" value="1"/>
</dbReference>
<dbReference type="SUPFAM" id="SSF52954">
    <property type="entry name" value="Class II aaRS ABD-related"/>
    <property type="match status" value="1"/>
</dbReference>
<dbReference type="SUPFAM" id="SSF55681">
    <property type="entry name" value="Class II aaRS and biotin synthetases"/>
    <property type="match status" value="1"/>
</dbReference>
<dbReference type="SUPFAM" id="SSF81271">
    <property type="entry name" value="TGS-like"/>
    <property type="match status" value="1"/>
</dbReference>
<dbReference type="SUPFAM" id="SSF55186">
    <property type="entry name" value="ThrRS/AlaRS common domain"/>
    <property type="match status" value="1"/>
</dbReference>
<dbReference type="PROSITE" id="PS50862">
    <property type="entry name" value="AA_TRNA_LIGASE_II"/>
    <property type="match status" value="1"/>
</dbReference>
<dbReference type="PROSITE" id="PS51880">
    <property type="entry name" value="TGS"/>
    <property type="match status" value="1"/>
</dbReference>